<proteinExistence type="evidence at transcript level"/>
<protein>
    <recommendedName>
        <fullName>Nuclear ubiquitous casein and cyclin-dependent kinase substrate 1</fullName>
    </recommendedName>
</protein>
<gene>
    <name type="primary">NUCKS1</name>
</gene>
<feature type="chain" id="PRO_0000290031" description="Nuclear ubiquitous casein and cyclin-dependent kinase substrate 1">
    <location>
        <begin position="1"/>
        <end position="243"/>
    </location>
</feature>
<feature type="region of interest" description="Disordered" evidence="3">
    <location>
        <begin position="1"/>
        <end position="243"/>
    </location>
</feature>
<feature type="compositionally biased region" description="Basic residues" evidence="3">
    <location>
        <begin position="35"/>
        <end position="51"/>
    </location>
</feature>
<feature type="compositionally biased region" description="Basic and acidic residues" evidence="3">
    <location>
        <begin position="64"/>
        <end position="77"/>
    </location>
</feature>
<feature type="compositionally biased region" description="Low complexity" evidence="3">
    <location>
        <begin position="91"/>
        <end position="100"/>
    </location>
</feature>
<feature type="compositionally biased region" description="Acidic residues" evidence="3">
    <location>
        <begin position="111"/>
        <end position="124"/>
    </location>
</feature>
<feature type="compositionally biased region" description="Acidic residues" evidence="3">
    <location>
        <begin position="132"/>
        <end position="145"/>
    </location>
</feature>
<feature type="compositionally biased region" description="Basic residues" evidence="3">
    <location>
        <begin position="149"/>
        <end position="174"/>
    </location>
</feature>
<feature type="compositionally biased region" description="Basic and acidic residues" evidence="3">
    <location>
        <begin position="197"/>
        <end position="206"/>
    </location>
</feature>
<feature type="compositionally biased region" description="Acidic residues" evidence="3">
    <location>
        <begin position="232"/>
        <end position="243"/>
    </location>
</feature>
<feature type="modified residue" description="Phosphotyrosine" evidence="1">
    <location>
        <position position="13"/>
    </location>
</feature>
<feature type="modified residue" description="Phosphoserine" evidence="2">
    <location>
        <position position="14"/>
    </location>
</feature>
<feature type="modified residue" description="Phosphoserine" evidence="2">
    <location>
        <position position="19"/>
    </location>
</feature>
<feature type="modified residue" description="Phosphotyrosine" evidence="2">
    <location>
        <position position="26"/>
    </location>
</feature>
<feature type="modified residue" description="Phosphoserine" evidence="2">
    <location>
        <position position="54"/>
    </location>
</feature>
<feature type="modified residue" description="Phosphoserine" evidence="2">
    <location>
        <position position="58"/>
    </location>
</feature>
<feature type="modified residue" description="Phosphoserine" evidence="2">
    <location>
        <position position="61"/>
    </location>
</feature>
<feature type="modified residue" description="Phosphoserine" evidence="2">
    <location>
        <position position="73"/>
    </location>
</feature>
<feature type="modified residue" description="Phosphoserine" evidence="2">
    <location>
        <position position="75"/>
    </location>
</feature>
<feature type="modified residue" description="Phosphoserine" evidence="2">
    <location>
        <position position="79"/>
    </location>
</feature>
<feature type="modified residue" description="Phosphoserine" evidence="2">
    <location>
        <position position="113"/>
    </location>
</feature>
<feature type="modified residue" description="Phosphoserine" evidence="2">
    <location>
        <position position="130"/>
    </location>
</feature>
<feature type="modified residue" description="Phosphoserine" evidence="2">
    <location>
        <position position="132"/>
    </location>
</feature>
<feature type="modified residue" description="Phosphoserine" evidence="2">
    <location>
        <position position="144"/>
    </location>
</feature>
<feature type="modified residue" description="Phosphothreonine" evidence="2">
    <location>
        <position position="179"/>
    </location>
</feature>
<feature type="modified residue" description="Phosphoserine" evidence="2">
    <location>
        <position position="181"/>
    </location>
</feature>
<feature type="modified residue" description="Phosphothreonine" evidence="2">
    <location>
        <position position="202"/>
    </location>
</feature>
<feature type="modified residue" description="Phosphoserine" evidence="2">
    <location>
        <position position="204"/>
    </location>
</feature>
<feature type="modified residue" description="Phosphoserine" evidence="2">
    <location>
        <position position="214"/>
    </location>
</feature>
<feature type="modified residue" description="Phosphoserine" evidence="2">
    <location>
        <position position="223"/>
    </location>
</feature>
<feature type="modified residue" description="Phosphoserine" evidence="2">
    <location>
        <position position="229"/>
    </location>
</feature>
<feature type="modified residue" description="Phosphoserine" evidence="2">
    <location>
        <position position="234"/>
    </location>
</feature>
<feature type="modified residue" description="Phosphoserine" evidence="2">
    <location>
        <position position="240"/>
    </location>
</feature>
<organism>
    <name type="scientific">Bos taurus</name>
    <name type="common">Bovine</name>
    <dbReference type="NCBI Taxonomy" id="9913"/>
    <lineage>
        <taxon>Eukaryota</taxon>
        <taxon>Metazoa</taxon>
        <taxon>Chordata</taxon>
        <taxon>Craniata</taxon>
        <taxon>Vertebrata</taxon>
        <taxon>Euteleostomi</taxon>
        <taxon>Mammalia</taxon>
        <taxon>Eutheria</taxon>
        <taxon>Laurasiatheria</taxon>
        <taxon>Artiodactyla</taxon>
        <taxon>Ruminantia</taxon>
        <taxon>Pecora</taxon>
        <taxon>Bovidae</taxon>
        <taxon>Bovinae</taxon>
        <taxon>Bos</taxon>
    </lineage>
</organism>
<evidence type="ECO:0000250" key="1">
    <source>
        <dbReference type="UniProtKB" id="Q80XU3"/>
    </source>
</evidence>
<evidence type="ECO:0000250" key="2">
    <source>
        <dbReference type="UniProtKB" id="Q9H1E3"/>
    </source>
</evidence>
<evidence type="ECO:0000256" key="3">
    <source>
        <dbReference type="SAM" id="MobiDB-lite"/>
    </source>
</evidence>
<name>NUCKS_BOVIN</name>
<accession>Q29S11</accession>
<reference key="1">
    <citation type="submission" date="2006-02" db="EMBL/GenBank/DDBJ databases">
        <authorList>
            <consortium name="NIH - Mammalian Gene Collection (MGC) project"/>
        </authorList>
    </citation>
    <scope>NUCLEOTIDE SEQUENCE [LARGE SCALE MRNA]</scope>
    <source>
        <strain>Hereford</strain>
        <tissue>Uterus</tissue>
    </source>
</reference>
<keyword id="KW-0158">Chromosome</keyword>
<keyword id="KW-0227">DNA damage</keyword>
<keyword id="KW-0234">DNA repair</keyword>
<keyword id="KW-0539">Nucleus</keyword>
<keyword id="KW-0597">Phosphoprotein</keyword>
<keyword id="KW-1185">Reference proteome</keyword>
<sequence length="243" mass="27237">MSRPVRNRKVVDYSQFQESDDADEDYGRDSGPPAKKIRSSPREAKNKRRSGKNSQEDSEDSEEKDVKTKKDDSHSAEDSEDEKEDHKNVRQQRQAASKAASKQREMLMEDVGSEEEQEEEDEAPFQEKDSGSDEDFLVEDDDDSDYGSSKKKNKKMVKKSKPERKEKKMPKPRLKATVTPSPVKGKGKVGRPTASKASKEKTPSPKEEDEEPESPLEKKASSSPPPEKSGDEGSEDDAQSGED</sequence>
<comment type="function">
    <text evidence="2">Chromatin-associated protein involved in DNA repair by promoting homologous recombination (HR). Binds double-stranded DNA (dsDNA) and secondary DNA structures, such as D-loop structures, but with less affinity than RAD51AP1.</text>
</comment>
<comment type="subunit">
    <text evidence="2">Does not interact with RAD51.</text>
</comment>
<comment type="subcellular location">
    <subcellularLocation>
        <location evidence="2">Nucleus</location>
    </subcellularLocation>
    <subcellularLocation>
        <location evidence="2">Chromosome</location>
    </subcellularLocation>
</comment>
<comment type="PTM">
    <text evidence="2">Phosphorylated in an ATM-dependent manner in response to DNA damage. Phosphorylated by CDK1 and casein kinase.</text>
</comment>
<dbReference type="EMBL" id="BC113259">
    <property type="protein sequence ID" value="AAI13260.1"/>
    <property type="molecule type" value="mRNA"/>
</dbReference>
<dbReference type="RefSeq" id="NP_001039385.1">
    <property type="nucleotide sequence ID" value="NM_001045920.1"/>
</dbReference>
<dbReference type="FunCoup" id="Q29S11">
    <property type="interactions" value="2724"/>
</dbReference>
<dbReference type="STRING" id="9913.ENSBTAP00000058586"/>
<dbReference type="iPTMnet" id="Q29S11"/>
<dbReference type="PaxDb" id="9913-ENSBTAP00000049804"/>
<dbReference type="Ensembl" id="ENSBTAT00000057198.3">
    <property type="protein sequence ID" value="ENSBTAP00000049804.2"/>
    <property type="gene ID" value="ENSBTAG00000008001.7"/>
</dbReference>
<dbReference type="GeneID" id="505585"/>
<dbReference type="KEGG" id="bta:505585"/>
<dbReference type="CTD" id="64710"/>
<dbReference type="VEuPathDB" id="HostDB:ENSBTAG00000008001"/>
<dbReference type="VGNC" id="VGNC:32320">
    <property type="gene designation" value="NUCKS1"/>
</dbReference>
<dbReference type="eggNOG" id="ENOG502R8NJ">
    <property type="taxonomic scope" value="Eukaryota"/>
</dbReference>
<dbReference type="GeneTree" id="ENSGT00940000153414"/>
<dbReference type="HOGENOM" id="CLU_067355_0_1_1"/>
<dbReference type="InParanoid" id="Q29S11"/>
<dbReference type="OrthoDB" id="9950344at2759"/>
<dbReference type="Proteomes" id="UP000009136">
    <property type="component" value="Chromosome 16"/>
</dbReference>
<dbReference type="Bgee" id="ENSBTAG00000008001">
    <property type="expression patterns" value="Expressed in theca cell and 111 other cell types or tissues"/>
</dbReference>
<dbReference type="GO" id="GO:0005694">
    <property type="term" value="C:chromosome"/>
    <property type="evidence" value="ECO:0007669"/>
    <property type="project" value="UniProtKB-SubCell"/>
</dbReference>
<dbReference type="GO" id="GO:0005737">
    <property type="term" value="C:cytoplasm"/>
    <property type="evidence" value="ECO:0000318"/>
    <property type="project" value="GO_Central"/>
</dbReference>
<dbReference type="GO" id="GO:0005634">
    <property type="term" value="C:nucleus"/>
    <property type="evidence" value="ECO:0007669"/>
    <property type="project" value="UniProtKB-SubCell"/>
</dbReference>
<dbReference type="GO" id="GO:0003690">
    <property type="term" value="F:double-stranded DNA binding"/>
    <property type="evidence" value="ECO:0000318"/>
    <property type="project" value="GO_Central"/>
</dbReference>
<dbReference type="GO" id="GO:0003697">
    <property type="term" value="F:single-stranded DNA binding"/>
    <property type="evidence" value="ECO:0000318"/>
    <property type="project" value="GO_Central"/>
</dbReference>
<dbReference type="GO" id="GO:0000724">
    <property type="term" value="P:double-strand break repair via homologous recombination"/>
    <property type="evidence" value="ECO:0000318"/>
    <property type="project" value="GO_Central"/>
</dbReference>
<dbReference type="GO" id="GO:0036297">
    <property type="term" value="P:interstrand cross-link repair"/>
    <property type="evidence" value="ECO:0000318"/>
    <property type="project" value="GO_Central"/>
</dbReference>
<dbReference type="InterPro" id="IPR052003">
    <property type="entry name" value="HR_DNA-Binding_Protein"/>
</dbReference>
<dbReference type="PANTHER" id="PTHR15361:SF1">
    <property type="entry name" value="NUCLEAR UBIQUITOUS CASEIN AND CYCLIN-DEPENDENT KINASE SUBSTRATE 1"/>
    <property type="match status" value="1"/>
</dbReference>
<dbReference type="PANTHER" id="PTHR15361">
    <property type="entry name" value="RAD51/NUKS-INTERACTING PROTEIN"/>
    <property type="match status" value="1"/>
</dbReference>